<comment type="function">
    <text evidence="1">Reversibly catalyzes the transfer of the carbamoyl group from carbamoyl phosphate (CP) to the N(epsilon) atom of ornithine (ORN) to produce L-citrulline.</text>
</comment>
<comment type="catalytic activity">
    <reaction evidence="2">
        <text>carbamoyl phosphate + L-ornithine = L-citrulline + phosphate + H(+)</text>
        <dbReference type="Rhea" id="RHEA:19513"/>
        <dbReference type="ChEBI" id="CHEBI:15378"/>
        <dbReference type="ChEBI" id="CHEBI:43474"/>
        <dbReference type="ChEBI" id="CHEBI:46911"/>
        <dbReference type="ChEBI" id="CHEBI:57743"/>
        <dbReference type="ChEBI" id="CHEBI:58228"/>
        <dbReference type="EC" id="2.1.3.3"/>
    </reaction>
</comment>
<comment type="pathway">
    <text evidence="2">Amino-acid biosynthesis; L-arginine biosynthesis; L-arginine from L-ornithine and carbamoyl phosphate: step 1/3.</text>
</comment>
<comment type="subcellular location">
    <subcellularLocation>
        <location evidence="2">Cytoplasm</location>
    </subcellularLocation>
</comment>
<comment type="similarity">
    <text evidence="2">Belongs to the aspartate/ornithine carbamoyltransferase superfamily. OTCase family.</text>
</comment>
<protein>
    <recommendedName>
        <fullName evidence="2">Ornithine carbamoyltransferase</fullName>
        <shortName evidence="2">OTCase</shortName>
        <ecNumber evidence="2">2.1.3.3</ecNumber>
    </recommendedName>
</protein>
<organism>
    <name type="scientific">Listeria innocua serovar 6a (strain ATCC BAA-680 / CLIP 11262)</name>
    <dbReference type="NCBI Taxonomy" id="272626"/>
    <lineage>
        <taxon>Bacteria</taxon>
        <taxon>Bacillati</taxon>
        <taxon>Bacillota</taxon>
        <taxon>Bacilli</taxon>
        <taxon>Bacillales</taxon>
        <taxon>Listeriaceae</taxon>
        <taxon>Listeria</taxon>
    </lineage>
</organism>
<gene>
    <name evidence="2" type="primary">argF</name>
    <name type="ordered locus">lin1629</name>
</gene>
<dbReference type="EC" id="2.1.3.3" evidence="2"/>
<dbReference type="EMBL" id="AL596169">
    <property type="protein sequence ID" value="CAC96860.1"/>
    <property type="molecule type" value="Genomic_DNA"/>
</dbReference>
<dbReference type="PIR" id="AD1636">
    <property type="entry name" value="AD1636"/>
</dbReference>
<dbReference type="RefSeq" id="WP_010991620.1">
    <property type="nucleotide sequence ID" value="NC_003212.1"/>
</dbReference>
<dbReference type="SMR" id="Q92BC1"/>
<dbReference type="STRING" id="272626.gene:17565960"/>
<dbReference type="GeneID" id="93235011"/>
<dbReference type="KEGG" id="lin:argF"/>
<dbReference type="eggNOG" id="COG0078">
    <property type="taxonomic scope" value="Bacteria"/>
</dbReference>
<dbReference type="HOGENOM" id="CLU_043846_3_2_9"/>
<dbReference type="OrthoDB" id="9802587at2"/>
<dbReference type="UniPathway" id="UPA00068">
    <property type="reaction ID" value="UER00112"/>
</dbReference>
<dbReference type="Proteomes" id="UP000002513">
    <property type="component" value="Chromosome"/>
</dbReference>
<dbReference type="GO" id="GO:0005737">
    <property type="term" value="C:cytoplasm"/>
    <property type="evidence" value="ECO:0007669"/>
    <property type="project" value="UniProtKB-SubCell"/>
</dbReference>
<dbReference type="GO" id="GO:0016597">
    <property type="term" value="F:amino acid binding"/>
    <property type="evidence" value="ECO:0007669"/>
    <property type="project" value="InterPro"/>
</dbReference>
<dbReference type="GO" id="GO:0004585">
    <property type="term" value="F:ornithine carbamoyltransferase activity"/>
    <property type="evidence" value="ECO:0007669"/>
    <property type="project" value="UniProtKB-UniRule"/>
</dbReference>
<dbReference type="GO" id="GO:0042450">
    <property type="term" value="P:arginine biosynthetic process via ornithine"/>
    <property type="evidence" value="ECO:0007669"/>
    <property type="project" value="TreeGrafter"/>
</dbReference>
<dbReference type="GO" id="GO:0019240">
    <property type="term" value="P:citrulline biosynthetic process"/>
    <property type="evidence" value="ECO:0007669"/>
    <property type="project" value="TreeGrafter"/>
</dbReference>
<dbReference type="GO" id="GO:0006526">
    <property type="term" value="P:L-arginine biosynthetic process"/>
    <property type="evidence" value="ECO:0007669"/>
    <property type="project" value="UniProtKB-UniRule"/>
</dbReference>
<dbReference type="FunFam" id="3.40.50.1370:FF:000008">
    <property type="entry name" value="Ornithine carbamoyltransferase"/>
    <property type="match status" value="1"/>
</dbReference>
<dbReference type="FunFam" id="3.40.50.1370:FF:000016">
    <property type="entry name" value="Ornithine carbamoyltransferase"/>
    <property type="match status" value="1"/>
</dbReference>
<dbReference type="Gene3D" id="3.40.50.1370">
    <property type="entry name" value="Aspartate/ornithine carbamoyltransferase"/>
    <property type="match status" value="2"/>
</dbReference>
<dbReference type="HAMAP" id="MF_01109">
    <property type="entry name" value="OTCase"/>
    <property type="match status" value="1"/>
</dbReference>
<dbReference type="InterPro" id="IPR006132">
    <property type="entry name" value="Asp/Orn_carbamoyltranf_P-bd"/>
</dbReference>
<dbReference type="InterPro" id="IPR006130">
    <property type="entry name" value="Asp/Orn_carbamoylTrfase"/>
</dbReference>
<dbReference type="InterPro" id="IPR036901">
    <property type="entry name" value="Asp/Orn_carbamoylTrfase_sf"/>
</dbReference>
<dbReference type="InterPro" id="IPR006131">
    <property type="entry name" value="Asp_carbamoyltransf_Asp/Orn-bd"/>
</dbReference>
<dbReference type="InterPro" id="IPR002292">
    <property type="entry name" value="Orn/put_carbamltrans"/>
</dbReference>
<dbReference type="InterPro" id="IPR024904">
    <property type="entry name" value="OTCase_ArgI"/>
</dbReference>
<dbReference type="NCBIfam" id="TIGR00658">
    <property type="entry name" value="orni_carb_tr"/>
    <property type="match status" value="1"/>
</dbReference>
<dbReference type="NCBIfam" id="NF001986">
    <property type="entry name" value="PRK00779.1"/>
    <property type="match status" value="1"/>
</dbReference>
<dbReference type="PANTHER" id="PTHR45753">
    <property type="entry name" value="ORNITHINE CARBAMOYLTRANSFERASE, MITOCHONDRIAL"/>
    <property type="match status" value="1"/>
</dbReference>
<dbReference type="PANTHER" id="PTHR45753:SF3">
    <property type="entry name" value="ORNITHINE TRANSCARBAMYLASE, MITOCHONDRIAL"/>
    <property type="match status" value="1"/>
</dbReference>
<dbReference type="Pfam" id="PF00185">
    <property type="entry name" value="OTCace"/>
    <property type="match status" value="1"/>
</dbReference>
<dbReference type="Pfam" id="PF02729">
    <property type="entry name" value="OTCace_N"/>
    <property type="match status" value="1"/>
</dbReference>
<dbReference type="PRINTS" id="PR00100">
    <property type="entry name" value="AOTCASE"/>
</dbReference>
<dbReference type="PRINTS" id="PR00102">
    <property type="entry name" value="OTCASE"/>
</dbReference>
<dbReference type="SUPFAM" id="SSF53671">
    <property type="entry name" value="Aspartate/ornithine carbamoyltransferase"/>
    <property type="match status" value="1"/>
</dbReference>
<dbReference type="PROSITE" id="PS00097">
    <property type="entry name" value="CARBAMOYLTRANSFERASE"/>
    <property type="match status" value="1"/>
</dbReference>
<reference key="1">
    <citation type="journal article" date="2001" name="Science">
        <title>Comparative genomics of Listeria species.</title>
        <authorList>
            <person name="Glaser P."/>
            <person name="Frangeul L."/>
            <person name="Buchrieser C."/>
            <person name="Rusniok C."/>
            <person name="Amend A."/>
            <person name="Baquero F."/>
            <person name="Berche P."/>
            <person name="Bloecker H."/>
            <person name="Brandt P."/>
            <person name="Chakraborty T."/>
            <person name="Charbit A."/>
            <person name="Chetouani F."/>
            <person name="Couve E."/>
            <person name="de Daruvar A."/>
            <person name="Dehoux P."/>
            <person name="Domann E."/>
            <person name="Dominguez-Bernal G."/>
            <person name="Duchaud E."/>
            <person name="Durant L."/>
            <person name="Dussurget O."/>
            <person name="Entian K.-D."/>
            <person name="Fsihi H."/>
            <person name="Garcia-del Portillo F."/>
            <person name="Garrido P."/>
            <person name="Gautier L."/>
            <person name="Goebel W."/>
            <person name="Gomez-Lopez N."/>
            <person name="Hain T."/>
            <person name="Hauf J."/>
            <person name="Jackson D."/>
            <person name="Jones L.-M."/>
            <person name="Kaerst U."/>
            <person name="Kreft J."/>
            <person name="Kuhn M."/>
            <person name="Kunst F."/>
            <person name="Kurapkat G."/>
            <person name="Madueno E."/>
            <person name="Maitournam A."/>
            <person name="Mata Vicente J."/>
            <person name="Ng E."/>
            <person name="Nedjari H."/>
            <person name="Nordsiek G."/>
            <person name="Novella S."/>
            <person name="de Pablos B."/>
            <person name="Perez-Diaz J.-C."/>
            <person name="Purcell R."/>
            <person name="Remmel B."/>
            <person name="Rose M."/>
            <person name="Schlueter T."/>
            <person name="Simoes N."/>
            <person name="Tierrez A."/>
            <person name="Vazquez-Boland J.-A."/>
            <person name="Voss H."/>
            <person name="Wehland J."/>
            <person name="Cossart P."/>
        </authorList>
    </citation>
    <scope>NUCLEOTIDE SEQUENCE [LARGE SCALE GENOMIC DNA]</scope>
    <source>
        <strain>ATCC BAA-680 / CLIP 11262</strain>
    </source>
</reference>
<feature type="chain" id="PRO_0000112942" description="Ornithine carbamoyltransferase">
    <location>
        <begin position="1"/>
        <end position="316"/>
    </location>
</feature>
<feature type="binding site" evidence="2">
    <location>
        <begin position="59"/>
        <end position="62"/>
    </location>
    <ligand>
        <name>carbamoyl phosphate</name>
        <dbReference type="ChEBI" id="CHEBI:58228"/>
    </ligand>
</feature>
<feature type="binding site" evidence="2">
    <location>
        <position position="86"/>
    </location>
    <ligand>
        <name>carbamoyl phosphate</name>
        <dbReference type="ChEBI" id="CHEBI:58228"/>
    </ligand>
</feature>
<feature type="binding site" evidence="2">
    <location>
        <position position="110"/>
    </location>
    <ligand>
        <name>carbamoyl phosphate</name>
        <dbReference type="ChEBI" id="CHEBI:58228"/>
    </ligand>
</feature>
<feature type="binding site" evidence="2">
    <location>
        <begin position="137"/>
        <end position="140"/>
    </location>
    <ligand>
        <name>carbamoyl phosphate</name>
        <dbReference type="ChEBI" id="CHEBI:58228"/>
    </ligand>
</feature>
<feature type="binding site" evidence="2">
    <location>
        <position position="168"/>
    </location>
    <ligand>
        <name>L-ornithine</name>
        <dbReference type="ChEBI" id="CHEBI:46911"/>
    </ligand>
</feature>
<feature type="binding site" evidence="2">
    <location>
        <position position="232"/>
    </location>
    <ligand>
        <name>L-ornithine</name>
        <dbReference type="ChEBI" id="CHEBI:46911"/>
    </ligand>
</feature>
<feature type="binding site" evidence="2">
    <location>
        <begin position="236"/>
        <end position="237"/>
    </location>
    <ligand>
        <name>L-ornithine</name>
        <dbReference type="ChEBI" id="CHEBI:46911"/>
    </ligand>
</feature>
<feature type="binding site" evidence="2">
    <location>
        <begin position="273"/>
        <end position="274"/>
    </location>
    <ligand>
        <name>carbamoyl phosphate</name>
        <dbReference type="ChEBI" id="CHEBI:58228"/>
    </ligand>
</feature>
<feature type="binding site" evidence="2">
    <location>
        <position position="301"/>
    </location>
    <ligand>
        <name>carbamoyl phosphate</name>
        <dbReference type="ChEBI" id="CHEBI:58228"/>
    </ligand>
</feature>
<proteinExistence type="inferred from homology"/>
<evidence type="ECO:0000250" key="1"/>
<evidence type="ECO:0000255" key="2">
    <source>
        <dbReference type="HAMAP-Rule" id="MF_01109"/>
    </source>
</evidence>
<name>OTC_LISIN</name>
<keyword id="KW-0028">Amino-acid biosynthesis</keyword>
<keyword id="KW-0055">Arginine biosynthesis</keyword>
<keyword id="KW-0963">Cytoplasm</keyword>
<keyword id="KW-0808">Transferase</keyword>
<sequence>MTMYVKSNTTGKDMLSLLEWNKEELIDIIKLAVAMKTNPAHYSHILSGKILGMIFDKPSTRTRVSFEAGILQLGGQAIVMSSKELQIGRGEPIKDTAHVMSEYIDAIMIRTFSHEKVEELAYHAEIPIINGLTDLHHPCQALADLMTIYEWKDQLEGVKLAYIGDGNNVCHSLLLAGAMVGLDIRLAMPKGYEVDETILATAENLAKESGAKIFVTEDPKHAVTDADFIYTDVWTSMGQEEENAKRLADFGEKYQVNAELASIAKPDYHFLHCLPAHREEEVTAEIIDGNHSVIYQQAGNRLHAQKALLAAILEAK</sequence>
<accession>Q92BC1</accession>